<dbReference type="EC" id="3.6.5.-" evidence="1"/>
<dbReference type="EMBL" id="AP009240">
    <property type="protein sequence ID" value="BAG78991.1"/>
    <property type="molecule type" value="Genomic_DNA"/>
</dbReference>
<dbReference type="SMR" id="B6I1Q6"/>
<dbReference type="KEGG" id="ecy:ECSE_3467"/>
<dbReference type="HOGENOM" id="CLU_011747_2_0_6"/>
<dbReference type="Proteomes" id="UP000008199">
    <property type="component" value="Chromosome"/>
</dbReference>
<dbReference type="GO" id="GO:0005737">
    <property type="term" value="C:cytoplasm"/>
    <property type="evidence" value="ECO:0007669"/>
    <property type="project" value="UniProtKB-SubCell"/>
</dbReference>
<dbReference type="GO" id="GO:0005525">
    <property type="term" value="F:GTP binding"/>
    <property type="evidence" value="ECO:0007669"/>
    <property type="project" value="UniProtKB-UniRule"/>
</dbReference>
<dbReference type="GO" id="GO:0003924">
    <property type="term" value="F:GTPase activity"/>
    <property type="evidence" value="ECO:0007669"/>
    <property type="project" value="UniProtKB-UniRule"/>
</dbReference>
<dbReference type="GO" id="GO:0000287">
    <property type="term" value="F:magnesium ion binding"/>
    <property type="evidence" value="ECO:0007669"/>
    <property type="project" value="InterPro"/>
</dbReference>
<dbReference type="GO" id="GO:0042254">
    <property type="term" value="P:ribosome biogenesis"/>
    <property type="evidence" value="ECO:0007669"/>
    <property type="project" value="UniProtKB-UniRule"/>
</dbReference>
<dbReference type="CDD" id="cd01898">
    <property type="entry name" value="Obg"/>
    <property type="match status" value="1"/>
</dbReference>
<dbReference type="FunFam" id="2.70.210.12:FF:000001">
    <property type="entry name" value="GTPase Obg"/>
    <property type="match status" value="1"/>
</dbReference>
<dbReference type="FunFam" id="3.40.50.300:FF:000185">
    <property type="entry name" value="GTPase Obg"/>
    <property type="match status" value="1"/>
</dbReference>
<dbReference type="Gene3D" id="2.70.210.12">
    <property type="entry name" value="GTP1/OBG domain"/>
    <property type="match status" value="1"/>
</dbReference>
<dbReference type="Gene3D" id="3.40.50.300">
    <property type="entry name" value="P-loop containing nucleotide triphosphate hydrolases"/>
    <property type="match status" value="1"/>
</dbReference>
<dbReference type="HAMAP" id="MF_01454">
    <property type="entry name" value="GTPase_Obg"/>
    <property type="match status" value="1"/>
</dbReference>
<dbReference type="InterPro" id="IPR031167">
    <property type="entry name" value="G_OBG"/>
</dbReference>
<dbReference type="InterPro" id="IPR006073">
    <property type="entry name" value="GTP-bd"/>
</dbReference>
<dbReference type="InterPro" id="IPR014100">
    <property type="entry name" value="GTP-bd_Obg/CgtA"/>
</dbReference>
<dbReference type="InterPro" id="IPR006074">
    <property type="entry name" value="GTP1-OBG_CS"/>
</dbReference>
<dbReference type="InterPro" id="IPR006169">
    <property type="entry name" value="GTP1_OBG_dom"/>
</dbReference>
<dbReference type="InterPro" id="IPR036726">
    <property type="entry name" value="GTP1_OBG_dom_sf"/>
</dbReference>
<dbReference type="InterPro" id="IPR045086">
    <property type="entry name" value="OBG_GTPase"/>
</dbReference>
<dbReference type="InterPro" id="IPR027417">
    <property type="entry name" value="P-loop_NTPase"/>
</dbReference>
<dbReference type="NCBIfam" id="TIGR02729">
    <property type="entry name" value="Obg_CgtA"/>
    <property type="match status" value="1"/>
</dbReference>
<dbReference type="NCBIfam" id="NF008955">
    <property type="entry name" value="PRK12297.1"/>
    <property type="match status" value="1"/>
</dbReference>
<dbReference type="NCBIfam" id="NF008956">
    <property type="entry name" value="PRK12299.1"/>
    <property type="match status" value="1"/>
</dbReference>
<dbReference type="PANTHER" id="PTHR11702">
    <property type="entry name" value="DEVELOPMENTALLY REGULATED GTP-BINDING PROTEIN-RELATED"/>
    <property type="match status" value="1"/>
</dbReference>
<dbReference type="PANTHER" id="PTHR11702:SF31">
    <property type="entry name" value="MITOCHONDRIAL RIBOSOME-ASSOCIATED GTPASE 2"/>
    <property type="match status" value="1"/>
</dbReference>
<dbReference type="Pfam" id="PF01018">
    <property type="entry name" value="GTP1_OBG"/>
    <property type="match status" value="1"/>
</dbReference>
<dbReference type="Pfam" id="PF01926">
    <property type="entry name" value="MMR_HSR1"/>
    <property type="match status" value="1"/>
</dbReference>
<dbReference type="PIRSF" id="PIRSF002401">
    <property type="entry name" value="GTP_bd_Obg/CgtA"/>
    <property type="match status" value="1"/>
</dbReference>
<dbReference type="PRINTS" id="PR00326">
    <property type="entry name" value="GTP1OBG"/>
</dbReference>
<dbReference type="SUPFAM" id="SSF82051">
    <property type="entry name" value="Obg GTP-binding protein N-terminal domain"/>
    <property type="match status" value="1"/>
</dbReference>
<dbReference type="SUPFAM" id="SSF52540">
    <property type="entry name" value="P-loop containing nucleoside triphosphate hydrolases"/>
    <property type="match status" value="1"/>
</dbReference>
<dbReference type="PROSITE" id="PS51710">
    <property type="entry name" value="G_OBG"/>
    <property type="match status" value="1"/>
</dbReference>
<dbReference type="PROSITE" id="PS00905">
    <property type="entry name" value="GTP1_OBG"/>
    <property type="match status" value="1"/>
</dbReference>
<dbReference type="PROSITE" id="PS51883">
    <property type="entry name" value="OBG"/>
    <property type="match status" value="1"/>
</dbReference>
<reference key="1">
    <citation type="journal article" date="2008" name="DNA Res.">
        <title>Complete genome sequence and comparative analysis of the wild-type commensal Escherichia coli strain SE11 isolated from a healthy adult.</title>
        <authorList>
            <person name="Oshima K."/>
            <person name="Toh H."/>
            <person name="Ogura Y."/>
            <person name="Sasamoto H."/>
            <person name="Morita H."/>
            <person name="Park S.-H."/>
            <person name="Ooka T."/>
            <person name="Iyoda S."/>
            <person name="Taylor T.D."/>
            <person name="Hayashi T."/>
            <person name="Itoh K."/>
            <person name="Hattori M."/>
        </authorList>
    </citation>
    <scope>NUCLEOTIDE SEQUENCE [LARGE SCALE GENOMIC DNA]</scope>
    <source>
        <strain>SE11</strain>
    </source>
</reference>
<proteinExistence type="inferred from homology"/>
<organism>
    <name type="scientific">Escherichia coli (strain SE11)</name>
    <dbReference type="NCBI Taxonomy" id="409438"/>
    <lineage>
        <taxon>Bacteria</taxon>
        <taxon>Pseudomonadati</taxon>
        <taxon>Pseudomonadota</taxon>
        <taxon>Gammaproteobacteria</taxon>
        <taxon>Enterobacterales</taxon>
        <taxon>Enterobacteriaceae</taxon>
        <taxon>Escherichia</taxon>
    </lineage>
</organism>
<keyword id="KW-0963">Cytoplasm</keyword>
<keyword id="KW-0342">GTP-binding</keyword>
<keyword id="KW-0378">Hydrolase</keyword>
<keyword id="KW-0460">Magnesium</keyword>
<keyword id="KW-0479">Metal-binding</keyword>
<keyword id="KW-0547">Nucleotide-binding</keyword>
<gene>
    <name evidence="1" type="primary">obg</name>
    <name type="ordered locus">ECSE_3467</name>
</gene>
<evidence type="ECO:0000255" key="1">
    <source>
        <dbReference type="HAMAP-Rule" id="MF_01454"/>
    </source>
</evidence>
<evidence type="ECO:0000255" key="2">
    <source>
        <dbReference type="PROSITE-ProRule" id="PRU01231"/>
    </source>
</evidence>
<evidence type="ECO:0000256" key="3">
    <source>
        <dbReference type="SAM" id="MobiDB-lite"/>
    </source>
</evidence>
<accession>B6I1Q6</accession>
<comment type="function">
    <text evidence="1">An essential GTPase which binds GTP, GDP and possibly (p)ppGpp with moderate affinity, with high nucleotide exchange rates and a fairly low GTP hydrolysis rate. Plays a role in control of the cell cycle, stress response, ribosome biogenesis and in those bacteria that undergo differentiation, in morphogenesis control.</text>
</comment>
<comment type="cofactor">
    <cofactor evidence="1">
        <name>Mg(2+)</name>
        <dbReference type="ChEBI" id="CHEBI:18420"/>
    </cofactor>
</comment>
<comment type="subunit">
    <text evidence="1">Monomer.</text>
</comment>
<comment type="subcellular location">
    <subcellularLocation>
        <location evidence="1">Cytoplasm</location>
    </subcellularLocation>
</comment>
<comment type="similarity">
    <text evidence="1">Belongs to the TRAFAC class OBG-HflX-like GTPase superfamily. OBG GTPase family.</text>
</comment>
<feature type="chain" id="PRO_0000385913" description="GTPase Obg">
    <location>
        <begin position="1"/>
        <end position="390"/>
    </location>
</feature>
<feature type="domain" description="Obg" evidence="2">
    <location>
        <begin position="1"/>
        <end position="159"/>
    </location>
</feature>
<feature type="domain" description="OBG-type G" evidence="1">
    <location>
        <begin position="160"/>
        <end position="333"/>
    </location>
</feature>
<feature type="region of interest" description="Disordered" evidence="3">
    <location>
        <begin position="127"/>
        <end position="147"/>
    </location>
</feature>
<feature type="compositionally biased region" description="Polar residues" evidence="3">
    <location>
        <begin position="129"/>
        <end position="145"/>
    </location>
</feature>
<feature type="binding site" evidence="1">
    <location>
        <begin position="166"/>
        <end position="173"/>
    </location>
    <ligand>
        <name>GTP</name>
        <dbReference type="ChEBI" id="CHEBI:37565"/>
    </ligand>
</feature>
<feature type="binding site" evidence="1">
    <location>
        <position position="173"/>
    </location>
    <ligand>
        <name>Mg(2+)</name>
        <dbReference type="ChEBI" id="CHEBI:18420"/>
    </ligand>
</feature>
<feature type="binding site" evidence="1">
    <location>
        <begin position="191"/>
        <end position="195"/>
    </location>
    <ligand>
        <name>GTP</name>
        <dbReference type="ChEBI" id="CHEBI:37565"/>
    </ligand>
</feature>
<feature type="binding site" evidence="1">
    <location>
        <position position="193"/>
    </location>
    <ligand>
        <name>Mg(2+)</name>
        <dbReference type="ChEBI" id="CHEBI:18420"/>
    </ligand>
</feature>
<feature type="binding site" evidence="1">
    <location>
        <begin position="213"/>
        <end position="216"/>
    </location>
    <ligand>
        <name>GTP</name>
        <dbReference type="ChEBI" id="CHEBI:37565"/>
    </ligand>
</feature>
<feature type="binding site" evidence="1">
    <location>
        <begin position="283"/>
        <end position="286"/>
    </location>
    <ligand>
        <name>GTP</name>
        <dbReference type="ChEBI" id="CHEBI:37565"/>
    </ligand>
</feature>
<feature type="binding site" evidence="1">
    <location>
        <begin position="314"/>
        <end position="316"/>
    </location>
    <ligand>
        <name>GTP</name>
        <dbReference type="ChEBI" id="CHEBI:37565"/>
    </ligand>
</feature>
<sequence>MKFVDEASILVVAGDGGNGCVSFRREKYIPKGGPDGGDGGDGGDVWMEADENLNTLIDYRFEKSFRAERGQNGASRDCTGKRGKDVTIKVPVGTRVIDQGTGETMGDMTKHGQRLLVAKGGWHGLGNTRFKSSVNRTPRQKTNGTPGDKRELLLELMLLADVGMLGMPNAGKSTFIRAVSAAKPKVADYPFTTLVPSLGVVRMDNEKSFVVADIPGLIEGAAEGAGLGIRFLKHLERCRVLLHLIDIDPIDGTDPVENARIIISELEKYSQDLAAKPRWLVFNKIDLLDKAEAEEKAKAIAEALGWEDKYYLISAASGLGVKDLCWDVMTFIIENPVVQAEEAKQPEKVEFMWDDYHRQQLEEIAEEDDEDWDDDWDEDDEEGVEFIYKR</sequence>
<name>OBG_ECOSE</name>
<protein>
    <recommendedName>
        <fullName evidence="1">GTPase Obg</fullName>
        <ecNumber evidence="1">3.6.5.-</ecNumber>
    </recommendedName>
    <alternativeName>
        <fullName evidence="1">GTP-binding protein Obg</fullName>
    </alternativeName>
</protein>